<keyword id="KW-0067">ATP-binding</keyword>
<keyword id="KW-0547">Nucleotide-binding</keyword>
<keyword id="KW-0548">Nucleotidyltransferase</keyword>
<keyword id="KW-1185">Reference proteome</keyword>
<keyword id="KW-0808">Transferase</keyword>
<gene>
    <name evidence="1" type="primary">cysD</name>
    <name type="ordered locus">VF_0320</name>
</gene>
<protein>
    <recommendedName>
        <fullName evidence="1">Sulfate adenylyltransferase subunit 2</fullName>
        <ecNumber evidence="1">2.7.7.4</ecNumber>
    </recommendedName>
    <alternativeName>
        <fullName evidence="1">ATP-sulfurylase small subunit</fullName>
    </alternativeName>
    <alternativeName>
        <fullName evidence="1">Sulfate adenylate transferase</fullName>
        <shortName evidence="1">SAT</shortName>
    </alternativeName>
</protein>
<dbReference type="EC" id="2.7.7.4" evidence="1"/>
<dbReference type="EMBL" id="CP000020">
    <property type="protein sequence ID" value="AAW84815.1"/>
    <property type="molecule type" value="Genomic_DNA"/>
</dbReference>
<dbReference type="RefSeq" id="WP_005417374.1">
    <property type="nucleotide sequence ID" value="NZ_CAWLES010000001.1"/>
</dbReference>
<dbReference type="RefSeq" id="YP_203703.1">
    <property type="nucleotide sequence ID" value="NC_006840.2"/>
</dbReference>
<dbReference type="SMR" id="Q5E831"/>
<dbReference type="STRING" id="312309.VF_0320"/>
<dbReference type="EnsemblBacteria" id="AAW84815">
    <property type="protein sequence ID" value="AAW84815"/>
    <property type="gene ID" value="VF_0320"/>
</dbReference>
<dbReference type="GeneID" id="54162939"/>
<dbReference type="KEGG" id="vfi:VF_0320"/>
<dbReference type="PATRIC" id="fig|312309.11.peg.313"/>
<dbReference type="eggNOG" id="COG0175">
    <property type="taxonomic scope" value="Bacteria"/>
</dbReference>
<dbReference type="HOGENOM" id="CLU_043026_0_0_6"/>
<dbReference type="OrthoDB" id="9772604at2"/>
<dbReference type="UniPathway" id="UPA00140">
    <property type="reaction ID" value="UER00204"/>
</dbReference>
<dbReference type="Proteomes" id="UP000000537">
    <property type="component" value="Chromosome I"/>
</dbReference>
<dbReference type="GO" id="GO:0005524">
    <property type="term" value="F:ATP binding"/>
    <property type="evidence" value="ECO:0007669"/>
    <property type="project" value="UniProtKB-KW"/>
</dbReference>
<dbReference type="GO" id="GO:0004781">
    <property type="term" value="F:sulfate adenylyltransferase (ATP) activity"/>
    <property type="evidence" value="ECO:0007669"/>
    <property type="project" value="UniProtKB-UniRule"/>
</dbReference>
<dbReference type="GO" id="GO:0070814">
    <property type="term" value="P:hydrogen sulfide biosynthetic process"/>
    <property type="evidence" value="ECO:0007669"/>
    <property type="project" value="UniProtKB-UniRule"/>
</dbReference>
<dbReference type="GO" id="GO:0000103">
    <property type="term" value="P:sulfate assimilation"/>
    <property type="evidence" value="ECO:0007669"/>
    <property type="project" value="UniProtKB-UniRule"/>
</dbReference>
<dbReference type="CDD" id="cd23946">
    <property type="entry name" value="Sulfate_adenylyltransferase_2"/>
    <property type="match status" value="1"/>
</dbReference>
<dbReference type="FunFam" id="3.40.50.620:FF:000002">
    <property type="entry name" value="Sulfate adenylyltransferase subunit 2"/>
    <property type="match status" value="1"/>
</dbReference>
<dbReference type="Gene3D" id="3.40.50.620">
    <property type="entry name" value="HUPs"/>
    <property type="match status" value="1"/>
</dbReference>
<dbReference type="HAMAP" id="MF_00064">
    <property type="entry name" value="Sulf_adenylyltr_sub2"/>
    <property type="match status" value="1"/>
</dbReference>
<dbReference type="InterPro" id="IPR002500">
    <property type="entry name" value="PAPS_reduct_dom"/>
</dbReference>
<dbReference type="InterPro" id="IPR014729">
    <property type="entry name" value="Rossmann-like_a/b/a_fold"/>
</dbReference>
<dbReference type="InterPro" id="IPR011784">
    <property type="entry name" value="SO4_adenylTrfase_ssu"/>
</dbReference>
<dbReference type="InterPro" id="IPR050128">
    <property type="entry name" value="Sulfate_adenylyltrnsfr_sub2"/>
</dbReference>
<dbReference type="NCBIfam" id="TIGR02039">
    <property type="entry name" value="CysD"/>
    <property type="match status" value="1"/>
</dbReference>
<dbReference type="NCBIfam" id="NF003587">
    <property type="entry name" value="PRK05253.1"/>
    <property type="match status" value="1"/>
</dbReference>
<dbReference type="NCBIfam" id="NF009214">
    <property type="entry name" value="PRK12563.1"/>
    <property type="match status" value="1"/>
</dbReference>
<dbReference type="PANTHER" id="PTHR43196">
    <property type="entry name" value="SULFATE ADENYLYLTRANSFERASE SUBUNIT 2"/>
    <property type="match status" value="1"/>
</dbReference>
<dbReference type="PANTHER" id="PTHR43196:SF1">
    <property type="entry name" value="SULFATE ADENYLYLTRANSFERASE SUBUNIT 2"/>
    <property type="match status" value="1"/>
</dbReference>
<dbReference type="Pfam" id="PF01507">
    <property type="entry name" value="PAPS_reduct"/>
    <property type="match status" value="1"/>
</dbReference>
<dbReference type="PIRSF" id="PIRSF002936">
    <property type="entry name" value="CysDAde_trans"/>
    <property type="match status" value="1"/>
</dbReference>
<dbReference type="SUPFAM" id="SSF52402">
    <property type="entry name" value="Adenine nucleotide alpha hydrolases-like"/>
    <property type="match status" value="1"/>
</dbReference>
<evidence type="ECO:0000255" key="1">
    <source>
        <dbReference type="HAMAP-Rule" id="MF_00064"/>
    </source>
</evidence>
<evidence type="ECO:0000256" key="2">
    <source>
        <dbReference type="SAM" id="MobiDB-lite"/>
    </source>
</evidence>
<reference key="1">
    <citation type="journal article" date="2005" name="Proc. Natl. Acad. Sci. U.S.A.">
        <title>Complete genome sequence of Vibrio fischeri: a symbiotic bacterium with pathogenic congeners.</title>
        <authorList>
            <person name="Ruby E.G."/>
            <person name="Urbanowski M."/>
            <person name="Campbell J."/>
            <person name="Dunn A."/>
            <person name="Faini M."/>
            <person name="Gunsalus R."/>
            <person name="Lostroh P."/>
            <person name="Lupp C."/>
            <person name="McCann J."/>
            <person name="Millikan D."/>
            <person name="Schaefer A."/>
            <person name="Stabb E."/>
            <person name="Stevens A."/>
            <person name="Visick K."/>
            <person name="Whistler C."/>
            <person name="Greenberg E.P."/>
        </authorList>
    </citation>
    <scope>NUCLEOTIDE SEQUENCE [LARGE SCALE GENOMIC DNA]</scope>
    <source>
        <strain>ATCC 700601 / ES114</strain>
    </source>
</reference>
<proteinExistence type="inferred from homology"/>
<comment type="function">
    <text evidence="1">With CysN forms the ATP sulfurylase (ATPS) that catalyzes the adenylation of sulfate producing adenosine 5'-phosphosulfate (APS) and diphosphate, the first enzymatic step in sulfur assimilation pathway. APS synthesis involves the formation of a high-energy phosphoric-sulfuric acid anhydride bond driven by GTP hydrolysis by CysN coupled to ATP hydrolysis by CysD.</text>
</comment>
<comment type="catalytic activity">
    <reaction evidence="1">
        <text>sulfate + ATP + H(+) = adenosine 5'-phosphosulfate + diphosphate</text>
        <dbReference type="Rhea" id="RHEA:18133"/>
        <dbReference type="ChEBI" id="CHEBI:15378"/>
        <dbReference type="ChEBI" id="CHEBI:16189"/>
        <dbReference type="ChEBI" id="CHEBI:30616"/>
        <dbReference type="ChEBI" id="CHEBI:33019"/>
        <dbReference type="ChEBI" id="CHEBI:58243"/>
        <dbReference type="EC" id="2.7.7.4"/>
    </reaction>
</comment>
<comment type="pathway">
    <text evidence="1">Sulfur metabolism; hydrogen sulfide biosynthesis; sulfite from sulfate: step 1/3.</text>
</comment>
<comment type="subunit">
    <text evidence="1">Heterodimer composed of CysD, the smaller subunit, and CysN.</text>
</comment>
<comment type="similarity">
    <text evidence="1">Belongs to the PAPS reductase family. CysD subfamily.</text>
</comment>
<sequence length="302" mass="35086">MDAKRLTHLQQLEAESIHIIREVAAEFDNPVMMYSIGKDSSVMLHLARKAFYPGKIPFPLLHVDTDWKFKEMIEFRDKTAEKYGFDLLVHKNPEGLEMGINPFVHGSSKHTDIMKTQGLKQALNKYGFDAAFGGARRDEEKSRAKERVYSFRDKNHTWDPKNQRPELWNTYNGQVNKGESIRVFPLSNWTELDIWQYIYLENIEIVPLYLSEKRPVVERDGMLIMVDDERLKLEEGEEIQHKDIRFRTLGCYPLTGAVESKANTLPEIIEEMLVATSSERQGRAIDHDSSGSMELKKRQGYF</sequence>
<feature type="chain" id="PRO_1000008998" description="Sulfate adenylyltransferase subunit 2">
    <location>
        <begin position="1"/>
        <end position="302"/>
    </location>
</feature>
<feature type="region of interest" description="Disordered" evidence="2">
    <location>
        <begin position="279"/>
        <end position="302"/>
    </location>
</feature>
<feature type="compositionally biased region" description="Basic and acidic residues" evidence="2">
    <location>
        <begin position="280"/>
        <end position="302"/>
    </location>
</feature>
<accession>Q5E831</accession>
<name>CYSD_ALIF1</name>
<organism>
    <name type="scientific">Aliivibrio fischeri (strain ATCC 700601 / ES114)</name>
    <name type="common">Vibrio fischeri</name>
    <dbReference type="NCBI Taxonomy" id="312309"/>
    <lineage>
        <taxon>Bacteria</taxon>
        <taxon>Pseudomonadati</taxon>
        <taxon>Pseudomonadota</taxon>
        <taxon>Gammaproteobacteria</taxon>
        <taxon>Vibrionales</taxon>
        <taxon>Vibrionaceae</taxon>
        <taxon>Aliivibrio</taxon>
    </lineage>
</organism>